<dbReference type="EC" id="2.8.1.4" evidence="1"/>
<dbReference type="EMBL" id="CP000730">
    <property type="protein sequence ID" value="ABX29709.1"/>
    <property type="molecule type" value="Genomic_DNA"/>
</dbReference>
<dbReference type="RefSeq" id="WP_000872653.1">
    <property type="nucleotide sequence ID" value="NC_010079.1"/>
</dbReference>
<dbReference type="SMR" id="A8Z2N1"/>
<dbReference type="KEGG" id="sax:USA300HOU_1702"/>
<dbReference type="HOGENOM" id="CLU_037952_4_0_9"/>
<dbReference type="UniPathway" id="UPA00060"/>
<dbReference type="GO" id="GO:0005829">
    <property type="term" value="C:cytosol"/>
    <property type="evidence" value="ECO:0007669"/>
    <property type="project" value="TreeGrafter"/>
</dbReference>
<dbReference type="GO" id="GO:0005524">
    <property type="term" value="F:ATP binding"/>
    <property type="evidence" value="ECO:0007669"/>
    <property type="project" value="UniProtKB-UniRule"/>
</dbReference>
<dbReference type="GO" id="GO:0004810">
    <property type="term" value="F:CCA tRNA nucleotidyltransferase activity"/>
    <property type="evidence" value="ECO:0007669"/>
    <property type="project" value="InterPro"/>
</dbReference>
<dbReference type="GO" id="GO:0000049">
    <property type="term" value="F:tRNA binding"/>
    <property type="evidence" value="ECO:0007669"/>
    <property type="project" value="UniProtKB-UniRule"/>
</dbReference>
<dbReference type="GO" id="GO:0140741">
    <property type="term" value="F:tRNA-uracil-4 sulfurtransferase activity"/>
    <property type="evidence" value="ECO:0007669"/>
    <property type="project" value="UniProtKB-EC"/>
</dbReference>
<dbReference type="GO" id="GO:0009228">
    <property type="term" value="P:thiamine biosynthetic process"/>
    <property type="evidence" value="ECO:0007669"/>
    <property type="project" value="UniProtKB-KW"/>
</dbReference>
<dbReference type="GO" id="GO:0009229">
    <property type="term" value="P:thiamine diphosphate biosynthetic process"/>
    <property type="evidence" value="ECO:0007669"/>
    <property type="project" value="UniProtKB-UniRule"/>
</dbReference>
<dbReference type="GO" id="GO:0052837">
    <property type="term" value="P:thiazole biosynthetic process"/>
    <property type="evidence" value="ECO:0007669"/>
    <property type="project" value="TreeGrafter"/>
</dbReference>
<dbReference type="GO" id="GO:0002937">
    <property type="term" value="P:tRNA 4-thiouridine biosynthesis"/>
    <property type="evidence" value="ECO:0007669"/>
    <property type="project" value="TreeGrafter"/>
</dbReference>
<dbReference type="CDD" id="cd01712">
    <property type="entry name" value="PPase_ThiI"/>
    <property type="match status" value="1"/>
</dbReference>
<dbReference type="CDD" id="cd11716">
    <property type="entry name" value="THUMP_ThiI"/>
    <property type="match status" value="1"/>
</dbReference>
<dbReference type="FunFam" id="3.30.2130.30:FF:000009">
    <property type="entry name" value="Probable tRNA sulfurtransferase"/>
    <property type="match status" value="1"/>
</dbReference>
<dbReference type="FunFam" id="3.40.50.620:FF:000053">
    <property type="entry name" value="Probable tRNA sulfurtransferase"/>
    <property type="match status" value="1"/>
</dbReference>
<dbReference type="Gene3D" id="3.30.2130.30">
    <property type="match status" value="1"/>
</dbReference>
<dbReference type="Gene3D" id="3.40.50.620">
    <property type="entry name" value="HUPs"/>
    <property type="match status" value="1"/>
</dbReference>
<dbReference type="HAMAP" id="MF_00021">
    <property type="entry name" value="ThiI"/>
    <property type="match status" value="1"/>
</dbReference>
<dbReference type="InterPro" id="IPR014729">
    <property type="entry name" value="Rossmann-like_a/b/a_fold"/>
</dbReference>
<dbReference type="InterPro" id="IPR020536">
    <property type="entry name" value="ThiI_AANH"/>
</dbReference>
<dbReference type="InterPro" id="IPR054173">
    <property type="entry name" value="ThiI_fer"/>
</dbReference>
<dbReference type="InterPro" id="IPR049961">
    <property type="entry name" value="ThiI_N"/>
</dbReference>
<dbReference type="InterPro" id="IPR004114">
    <property type="entry name" value="THUMP_dom"/>
</dbReference>
<dbReference type="InterPro" id="IPR049962">
    <property type="entry name" value="THUMP_ThiI"/>
</dbReference>
<dbReference type="InterPro" id="IPR003720">
    <property type="entry name" value="tRNA_STrfase"/>
</dbReference>
<dbReference type="InterPro" id="IPR050102">
    <property type="entry name" value="tRNA_sulfurtransferase_ThiI"/>
</dbReference>
<dbReference type="NCBIfam" id="TIGR00342">
    <property type="entry name" value="tRNA uracil 4-sulfurtransferase ThiI"/>
    <property type="match status" value="1"/>
</dbReference>
<dbReference type="PANTHER" id="PTHR43209">
    <property type="entry name" value="TRNA SULFURTRANSFERASE"/>
    <property type="match status" value="1"/>
</dbReference>
<dbReference type="PANTHER" id="PTHR43209:SF1">
    <property type="entry name" value="TRNA SULFURTRANSFERASE"/>
    <property type="match status" value="1"/>
</dbReference>
<dbReference type="Pfam" id="PF02568">
    <property type="entry name" value="ThiI"/>
    <property type="match status" value="1"/>
</dbReference>
<dbReference type="Pfam" id="PF22025">
    <property type="entry name" value="ThiI_fer"/>
    <property type="match status" value="1"/>
</dbReference>
<dbReference type="Pfam" id="PF02926">
    <property type="entry name" value="THUMP"/>
    <property type="match status" value="1"/>
</dbReference>
<dbReference type="SMART" id="SM00981">
    <property type="entry name" value="THUMP"/>
    <property type="match status" value="1"/>
</dbReference>
<dbReference type="SUPFAM" id="SSF52402">
    <property type="entry name" value="Adenine nucleotide alpha hydrolases-like"/>
    <property type="match status" value="1"/>
</dbReference>
<dbReference type="SUPFAM" id="SSF143437">
    <property type="entry name" value="THUMP domain-like"/>
    <property type="match status" value="1"/>
</dbReference>
<dbReference type="PROSITE" id="PS51165">
    <property type="entry name" value="THUMP"/>
    <property type="match status" value="1"/>
</dbReference>
<sequence>MKYDHLLVRYGELTLKGSNRKKFVNQLRNNVNKSLKGLDGFVVKGKRDRMYIELEDHADINEITYRLSKIFGIKSISPVLKVEKTIEAISAAAIKFAQQFEENSTFKIDVKRADKNFPMDTYELQRELGGAVLKHFDNISVNVKRPDHEIRVEVRLDAIYMYEEVVPGSGGLPVGTGGKTLLMLSGGIDSPVAGMEVMRRGVTIEAIHFHSPPFTSDQAKEKVIELTRILAERVGPIKLHIVPFTELQKQVNKVVHPRYTMTSTRRMMMRVADKLVHQIGALAIVNGENLGQVASQTLHSMYAINNVTSTPVLRPLLTYDKEEIIIKSKEIGTFETSIQPFEDCCTIFTPKNPVTEPNFDKVVQYESVFDFEEMINRAVENIETLEITSDYKTIKEQQTNQLINDFL</sequence>
<gene>
    <name evidence="1" type="primary">thiI</name>
    <name type="ordered locus">USA300HOU_1702</name>
</gene>
<protein>
    <recommendedName>
        <fullName evidence="1">Probable tRNA sulfurtransferase</fullName>
        <ecNumber evidence="1">2.8.1.4</ecNumber>
    </recommendedName>
    <alternativeName>
        <fullName evidence="1">Sulfur carrier protein ThiS sulfurtransferase</fullName>
    </alternativeName>
    <alternativeName>
        <fullName evidence="1">Thiamine biosynthesis protein ThiI</fullName>
    </alternativeName>
    <alternativeName>
        <fullName evidence="1">tRNA 4-thiouridine synthase</fullName>
    </alternativeName>
</protein>
<feature type="chain" id="PRO_1000074289" description="Probable tRNA sulfurtransferase">
    <location>
        <begin position="1"/>
        <end position="407"/>
    </location>
</feature>
<feature type="domain" description="THUMP" evidence="1">
    <location>
        <begin position="61"/>
        <end position="165"/>
    </location>
</feature>
<feature type="binding site" evidence="1">
    <location>
        <begin position="183"/>
        <end position="184"/>
    </location>
    <ligand>
        <name>ATP</name>
        <dbReference type="ChEBI" id="CHEBI:30616"/>
    </ligand>
</feature>
<feature type="binding site" evidence="1">
    <location>
        <begin position="208"/>
        <end position="209"/>
    </location>
    <ligand>
        <name>ATP</name>
        <dbReference type="ChEBI" id="CHEBI:30616"/>
    </ligand>
</feature>
<feature type="binding site" evidence="1">
    <location>
        <position position="265"/>
    </location>
    <ligand>
        <name>ATP</name>
        <dbReference type="ChEBI" id="CHEBI:30616"/>
    </ligand>
</feature>
<feature type="binding site" evidence="1">
    <location>
        <position position="287"/>
    </location>
    <ligand>
        <name>ATP</name>
        <dbReference type="ChEBI" id="CHEBI:30616"/>
    </ligand>
</feature>
<feature type="binding site" evidence="1">
    <location>
        <position position="296"/>
    </location>
    <ligand>
        <name>ATP</name>
        <dbReference type="ChEBI" id="CHEBI:30616"/>
    </ligand>
</feature>
<organism>
    <name type="scientific">Staphylococcus aureus (strain USA300 / TCH1516)</name>
    <dbReference type="NCBI Taxonomy" id="451516"/>
    <lineage>
        <taxon>Bacteria</taxon>
        <taxon>Bacillati</taxon>
        <taxon>Bacillota</taxon>
        <taxon>Bacilli</taxon>
        <taxon>Bacillales</taxon>
        <taxon>Staphylococcaceae</taxon>
        <taxon>Staphylococcus</taxon>
    </lineage>
</organism>
<accession>A8Z2N1</accession>
<keyword id="KW-0067">ATP-binding</keyword>
<keyword id="KW-0963">Cytoplasm</keyword>
<keyword id="KW-0547">Nucleotide-binding</keyword>
<keyword id="KW-0694">RNA-binding</keyword>
<keyword id="KW-0784">Thiamine biosynthesis</keyword>
<keyword id="KW-0808">Transferase</keyword>
<keyword id="KW-0820">tRNA-binding</keyword>
<evidence type="ECO:0000255" key="1">
    <source>
        <dbReference type="HAMAP-Rule" id="MF_00021"/>
    </source>
</evidence>
<proteinExistence type="inferred from homology"/>
<reference key="1">
    <citation type="journal article" date="2007" name="BMC Microbiol.">
        <title>Subtle genetic changes enhance virulence of methicillin resistant and sensitive Staphylococcus aureus.</title>
        <authorList>
            <person name="Highlander S.K."/>
            <person name="Hulten K.G."/>
            <person name="Qin X."/>
            <person name="Jiang H."/>
            <person name="Yerrapragada S."/>
            <person name="Mason E.O. Jr."/>
            <person name="Shang Y."/>
            <person name="Williams T.M."/>
            <person name="Fortunov R.M."/>
            <person name="Liu Y."/>
            <person name="Igboeli O."/>
            <person name="Petrosino J."/>
            <person name="Tirumalai M."/>
            <person name="Uzman A."/>
            <person name="Fox G.E."/>
            <person name="Cardenas A.M."/>
            <person name="Muzny D.M."/>
            <person name="Hemphill L."/>
            <person name="Ding Y."/>
            <person name="Dugan S."/>
            <person name="Blyth P.R."/>
            <person name="Buhay C.J."/>
            <person name="Dinh H.H."/>
            <person name="Hawes A.C."/>
            <person name="Holder M."/>
            <person name="Kovar C.L."/>
            <person name="Lee S.L."/>
            <person name="Liu W."/>
            <person name="Nazareth L.V."/>
            <person name="Wang Q."/>
            <person name="Zhou J."/>
            <person name="Kaplan S.L."/>
            <person name="Weinstock G.M."/>
        </authorList>
    </citation>
    <scope>NUCLEOTIDE SEQUENCE [LARGE SCALE GENOMIC DNA]</scope>
    <source>
        <strain>USA300 / TCH1516</strain>
    </source>
</reference>
<comment type="function">
    <text evidence="1">Catalyzes the ATP-dependent transfer of a sulfur to tRNA to produce 4-thiouridine in position 8 of tRNAs, which functions as a near-UV photosensor. Also catalyzes the transfer of sulfur to the sulfur carrier protein ThiS, forming ThiS-thiocarboxylate. This is a step in the synthesis of thiazole, in the thiamine biosynthesis pathway. The sulfur is donated as persulfide by IscS.</text>
</comment>
<comment type="catalytic activity">
    <reaction evidence="1">
        <text>[ThiI sulfur-carrier protein]-S-sulfanyl-L-cysteine + a uridine in tRNA + 2 reduced [2Fe-2S]-[ferredoxin] + ATP + H(+) = [ThiI sulfur-carrier protein]-L-cysteine + a 4-thiouridine in tRNA + 2 oxidized [2Fe-2S]-[ferredoxin] + AMP + diphosphate</text>
        <dbReference type="Rhea" id="RHEA:24176"/>
        <dbReference type="Rhea" id="RHEA-COMP:10000"/>
        <dbReference type="Rhea" id="RHEA-COMP:10001"/>
        <dbReference type="Rhea" id="RHEA-COMP:13337"/>
        <dbReference type="Rhea" id="RHEA-COMP:13338"/>
        <dbReference type="Rhea" id="RHEA-COMP:13339"/>
        <dbReference type="Rhea" id="RHEA-COMP:13340"/>
        <dbReference type="ChEBI" id="CHEBI:15378"/>
        <dbReference type="ChEBI" id="CHEBI:29950"/>
        <dbReference type="ChEBI" id="CHEBI:30616"/>
        <dbReference type="ChEBI" id="CHEBI:33019"/>
        <dbReference type="ChEBI" id="CHEBI:33737"/>
        <dbReference type="ChEBI" id="CHEBI:33738"/>
        <dbReference type="ChEBI" id="CHEBI:61963"/>
        <dbReference type="ChEBI" id="CHEBI:65315"/>
        <dbReference type="ChEBI" id="CHEBI:136798"/>
        <dbReference type="ChEBI" id="CHEBI:456215"/>
        <dbReference type="EC" id="2.8.1.4"/>
    </reaction>
</comment>
<comment type="catalytic activity">
    <reaction evidence="1">
        <text>[ThiS sulfur-carrier protein]-C-terminal Gly-Gly-AMP + S-sulfanyl-L-cysteinyl-[cysteine desulfurase] + AH2 = [ThiS sulfur-carrier protein]-C-terminal-Gly-aminoethanethioate + L-cysteinyl-[cysteine desulfurase] + A + AMP + 2 H(+)</text>
        <dbReference type="Rhea" id="RHEA:43340"/>
        <dbReference type="Rhea" id="RHEA-COMP:12157"/>
        <dbReference type="Rhea" id="RHEA-COMP:12158"/>
        <dbReference type="Rhea" id="RHEA-COMP:12910"/>
        <dbReference type="Rhea" id="RHEA-COMP:19908"/>
        <dbReference type="ChEBI" id="CHEBI:13193"/>
        <dbReference type="ChEBI" id="CHEBI:15378"/>
        <dbReference type="ChEBI" id="CHEBI:17499"/>
        <dbReference type="ChEBI" id="CHEBI:29950"/>
        <dbReference type="ChEBI" id="CHEBI:61963"/>
        <dbReference type="ChEBI" id="CHEBI:90618"/>
        <dbReference type="ChEBI" id="CHEBI:232372"/>
        <dbReference type="ChEBI" id="CHEBI:456215"/>
    </reaction>
</comment>
<comment type="pathway">
    <text evidence="1">Cofactor biosynthesis; thiamine diphosphate biosynthesis.</text>
</comment>
<comment type="subcellular location">
    <subcellularLocation>
        <location evidence="1">Cytoplasm</location>
    </subcellularLocation>
</comment>
<comment type="similarity">
    <text evidence="1">Belongs to the ThiI family.</text>
</comment>
<name>THII_STAAT</name>